<proteinExistence type="inferred from homology"/>
<evidence type="ECO:0000255" key="1">
    <source>
        <dbReference type="HAMAP-Rule" id="MF_00580"/>
    </source>
</evidence>
<keyword id="KW-0143">Chaperone</keyword>
<keyword id="KW-0963">Cytoplasm</keyword>
<accession>P0A1D6</accession>
<accession>Q9LC51</accession>
<feature type="chain" id="PRO_0000174833" description="Co-chaperonin GroES">
    <location>
        <begin position="1"/>
        <end position="97"/>
    </location>
</feature>
<reference key="1">
    <citation type="journal article" date="2001" name="Nature">
        <title>Complete genome sequence of a multiple drug resistant Salmonella enterica serovar Typhi CT18.</title>
        <authorList>
            <person name="Parkhill J."/>
            <person name="Dougan G."/>
            <person name="James K.D."/>
            <person name="Thomson N.R."/>
            <person name="Pickard D."/>
            <person name="Wain J."/>
            <person name="Churcher C.M."/>
            <person name="Mungall K.L."/>
            <person name="Bentley S.D."/>
            <person name="Holden M.T.G."/>
            <person name="Sebaihia M."/>
            <person name="Baker S."/>
            <person name="Basham D."/>
            <person name="Brooks K."/>
            <person name="Chillingworth T."/>
            <person name="Connerton P."/>
            <person name="Cronin A."/>
            <person name="Davis P."/>
            <person name="Davies R.M."/>
            <person name="Dowd L."/>
            <person name="White N."/>
            <person name="Farrar J."/>
            <person name="Feltwell T."/>
            <person name="Hamlin N."/>
            <person name="Haque A."/>
            <person name="Hien T.T."/>
            <person name="Holroyd S."/>
            <person name="Jagels K."/>
            <person name="Krogh A."/>
            <person name="Larsen T.S."/>
            <person name="Leather S."/>
            <person name="Moule S."/>
            <person name="O'Gaora P."/>
            <person name="Parry C."/>
            <person name="Quail M.A."/>
            <person name="Rutherford K.M."/>
            <person name="Simmonds M."/>
            <person name="Skelton J."/>
            <person name="Stevens K."/>
            <person name="Whitehead S."/>
            <person name="Barrell B.G."/>
        </authorList>
    </citation>
    <scope>NUCLEOTIDE SEQUENCE [LARGE SCALE GENOMIC DNA]</scope>
    <source>
        <strain>CT18</strain>
    </source>
</reference>
<reference key="2">
    <citation type="journal article" date="2003" name="J. Bacteriol.">
        <title>Comparative genomics of Salmonella enterica serovar Typhi strains Ty2 and CT18.</title>
        <authorList>
            <person name="Deng W."/>
            <person name="Liou S.-R."/>
            <person name="Plunkett G. III"/>
            <person name="Mayhew G.F."/>
            <person name="Rose D.J."/>
            <person name="Burland V."/>
            <person name="Kodoyianni V."/>
            <person name="Schwartz D.C."/>
            <person name="Blattner F.R."/>
        </authorList>
    </citation>
    <scope>NUCLEOTIDE SEQUENCE [LARGE SCALE GENOMIC DNA]</scope>
    <source>
        <strain>ATCC 700931 / Ty2</strain>
    </source>
</reference>
<gene>
    <name evidence="1" type="primary">groES</name>
    <name evidence="1" type="synonym">groS</name>
    <name type="synonym">mopB</name>
    <name type="ordered locus">STY4689</name>
    <name type="ordered locus">t4381</name>
</gene>
<sequence length="97" mass="10318">MSIRPLHDRVIVKRKEVESKSAGGIVLTGSAAGKSTRGEIIAVGKGRILDNGTVQPLDVKVGDIVIFNDGYGVKSEKIDNEEVLIMSESDILAIVEA</sequence>
<organism>
    <name type="scientific">Salmonella typhi</name>
    <dbReference type="NCBI Taxonomy" id="90370"/>
    <lineage>
        <taxon>Bacteria</taxon>
        <taxon>Pseudomonadati</taxon>
        <taxon>Pseudomonadota</taxon>
        <taxon>Gammaproteobacteria</taxon>
        <taxon>Enterobacterales</taxon>
        <taxon>Enterobacteriaceae</taxon>
        <taxon>Salmonella</taxon>
    </lineage>
</organism>
<comment type="function">
    <text evidence="1">Together with the chaperonin GroEL, plays an essential role in assisting protein folding. The GroEL-GroES system forms a nano-cage that allows encapsulation of the non-native substrate proteins and provides a physical environment optimized to promote and accelerate protein folding. GroES binds to the apical surface of the GroEL ring, thereby capping the opening of the GroEL channel.</text>
</comment>
<comment type="subunit">
    <text evidence="1">Heptamer of 7 subunits arranged in a ring. Interacts with the chaperonin GroEL.</text>
</comment>
<comment type="subcellular location">
    <subcellularLocation>
        <location evidence="1">Cytoplasm</location>
    </subcellularLocation>
</comment>
<comment type="similarity">
    <text evidence="1">Belongs to the GroES chaperonin family.</text>
</comment>
<name>CH10_SALTI</name>
<dbReference type="EMBL" id="AL513382">
    <property type="protein sequence ID" value="CAD06809.1"/>
    <property type="molecule type" value="Genomic_DNA"/>
</dbReference>
<dbReference type="EMBL" id="AE014613">
    <property type="protein sequence ID" value="AAO71832.1"/>
    <property type="molecule type" value="Genomic_DNA"/>
</dbReference>
<dbReference type="RefSeq" id="NP_458768.1">
    <property type="nucleotide sequence ID" value="NC_003198.1"/>
</dbReference>
<dbReference type="RefSeq" id="WP_000027827.1">
    <property type="nucleotide sequence ID" value="NZ_WSUR01000012.1"/>
</dbReference>
<dbReference type="SMR" id="P0A1D6"/>
<dbReference type="STRING" id="220341.gene:17588507"/>
<dbReference type="KEGG" id="stt:t4381"/>
<dbReference type="KEGG" id="sty:STY4689"/>
<dbReference type="PATRIC" id="fig|220341.7.peg.4789"/>
<dbReference type="eggNOG" id="COG0234">
    <property type="taxonomic scope" value="Bacteria"/>
</dbReference>
<dbReference type="HOGENOM" id="CLU_132825_1_1_6"/>
<dbReference type="OMA" id="EDFLIMR"/>
<dbReference type="OrthoDB" id="9806791at2"/>
<dbReference type="Proteomes" id="UP000000541">
    <property type="component" value="Chromosome"/>
</dbReference>
<dbReference type="Proteomes" id="UP000002670">
    <property type="component" value="Chromosome"/>
</dbReference>
<dbReference type="GO" id="GO:0005737">
    <property type="term" value="C:cytoplasm"/>
    <property type="evidence" value="ECO:0007669"/>
    <property type="project" value="UniProtKB-SubCell"/>
</dbReference>
<dbReference type="GO" id="GO:0005524">
    <property type="term" value="F:ATP binding"/>
    <property type="evidence" value="ECO:0007669"/>
    <property type="project" value="InterPro"/>
</dbReference>
<dbReference type="GO" id="GO:0046872">
    <property type="term" value="F:metal ion binding"/>
    <property type="evidence" value="ECO:0007669"/>
    <property type="project" value="TreeGrafter"/>
</dbReference>
<dbReference type="GO" id="GO:0044183">
    <property type="term" value="F:protein folding chaperone"/>
    <property type="evidence" value="ECO:0007669"/>
    <property type="project" value="InterPro"/>
</dbReference>
<dbReference type="GO" id="GO:0051087">
    <property type="term" value="F:protein-folding chaperone binding"/>
    <property type="evidence" value="ECO:0007669"/>
    <property type="project" value="TreeGrafter"/>
</dbReference>
<dbReference type="GO" id="GO:0051082">
    <property type="term" value="F:unfolded protein binding"/>
    <property type="evidence" value="ECO:0007669"/>
    <property type="project" value="TreeGrafter"/>
</dbReference>
<dbReference type="GO" id="GO:0051085">
    <property type="term" value="P:chaperone cofactor-dependent protein refolding"/>
    <property type="evidence" value="ECO:0007669"/>
    <property type="project" value="TreeGrafter"/>
</dbReference>
<dbReference type="CDD" id="cd00320">
    <property type="entry name" value="cpn10"/>
    <property type="match status" value="1"/>
</dbReference>
<dbReference type="FunFam" id="2.30.33.40:FF:000001">
    <property type="entry name" value="10 kDa chaperonin"/>
    <property type="match status" value="1"/>
</dbReference>
<dbReference type="Gene3D" id="2.30.33.40">
    <property type="entry name" value="GroES chaperonin"/>
    <property type="match status" value="1"/>
</dbReference>
<dbReference type="HAMAP" id="MF_00580">
    <property type="entry name" value="CH10"/>
    <property type="match status" value="1"/>
</dbReference>
<dbReference type="InterPro" id="IPR020818">
    <property type="entry name" value="Chaperonin_GroES"/>
</dbReference>
<dbReference type="InterPro" id="IPR037124">
    <property type="entry name" value="Chaperonin_GroES_sf"/>
</dbReference>
<dbReference type="InterPro" id="IPR018369">
    <property type="entry name" value="Chaprnonin_Cpn10_CS"/>
</dbReference>
<dbReference type="InterPro" id="IPR011032">
    <property type="entry name" value="GroES-like_sf"/>
</dbReference>
<dbReference type="NCBIfam" id="NF001526">
    <property type="entry name" value="PRK00364.1-1"/>
    <property type="match status" value="1"/>
</dbReference>
<dbReference type="NCBIfam" id="NF001527">
    <property type="entry name" value="PRK00364.1-2"/>
    <property type="match status" value="1"/>
</dbReference>
<dbReference type="NCBIfam" id="NF001531">
    <property type="entry name" value="PRK00364.2-2"/>
    <property type="match status" value="1"/>
</dbReference>
<dbReference type="PANTHER" id="PTHR10772">
    <property type="entry name" value="10 KDA HEAT SHOCK PROTEIN"/>
    <property type="match status" value="1"/>
</dbReference>
<dbReference type="PANTHER" id="PTHR10772:SF58">
    <property type="entry name" value="CO-CHAPERONIN GROES"/>
    <property type="match status" value="1"/>
</dbReference>
<dbReference type="Pfam" id="PF00166">
    <property type="entry name" value="Cpn10"/>
    <property type="match status" value="1"/>
</dbReference>
<dbReference type="PRINTS" id="PR00297">
    <property type="entry name" value="CHAPERONIN10"/>
</dbReference>
<dbReference type="SMART" id="SM00883">
    <property type="entry name" value="Cpn10"/>
    <property type="match status" value="1"/>
</dbReference>
<dbReference type="SUPFAM" id="SSF50129">
    <property type="entry name" value="GroES-like"/>
    <property type="match status" value="1"/>
</dbReference>
<dbReference type="PROSITE" id="PS00681">
    <property type="entry name" value="CHAPERONINS_CPN10"/>
    <property type="match status" value="1"/>
</dbReference>
<protein>
    <recommendedName>
        <fullName evidence="1">Co-chaperonin GroES</fullName>
    </recommendedName>
    <alternativeName>
        <fullName evidence="1">10 kDa chaperonin</fullName>
    </alternativeName>
    <alternativeName>
        <fullName evidence="1">Chaperonin-10</fullName>
        <shortName evidence="1">Cpn10</shortName>
    </alternativeName>
</protein>